<organism>
    <name type="scientific">Volvox carteri</name>
    <name type="common">Green alga</name>
    <dbReference type="NCBI Taxonomy" id="3067"/>
    <lineage>
        <taxon>Eukaryota</taxon>
        <taxon>Viridiplantae</taxon>
        <taxon>Chlorophyta</taxon>
        <taxon>core chlorophytes</taxon>
        <taxon>Chlorophyceae</taxon>
        <taxon>CS clade</taxon>
        <taxon>Chlamydomonadales</taxon>
        <taxon>Volvocaceae</taxon>
        <taxon>Volvox</taxon>
    </lineage>
</organism>
<proteinExistence type="evidence at transcript level"/>
<name>PSBO_VOLCA</name>
<gene>
    <name type="primary">PSBO</name>
</gene>
<evidence type="ECO:0000250" key="1"/>
<evidence type="ECO:0000305" key="2"/>
<accession>Q9SBN6</accession>
<protein>
    <recommendedName>
        <fullName>Oxygen-evolving enhancer protein 1, chloroplastic</fullName>
        <shortName>OEE1</shortName>
    </recommendedName>
</protein>
<feature type="transit peptide" description="Chloroplast" evidence="1">
    <location>
        <begin position="1"/>
        <end position="53"/>
    </location>
</feature>
<feature type="chain" id="PRO_0000029563" description="Oxygen-evolving enhancer protein 1, chloroplastic">
    <location>
        <begin position="54"/>
        <end position="293"/>
    </location>
</feature>
<reference key="1">
    <citation type="journal article" date="1999" name="Curr. Genet.">
        <title>Volvox germline-specific genes that are putative targets of RegA repression encode chloroplast proteins.</title>
        <authorList>
            <person name="Meissner M."/>
            <person name="Stark K."/>
            <person name="Cresnar B."/>
            <person name="Kirk D.L."/>
            <person name="Schmitt R."/>
        </authorList>
    </citation>
    <scope>NUCLEOTIDE SEQUENCE [MRNA]</scope>
    <source>
        <strain>f. Nagariensis</strain>
    </source>
</reference>
<keyword id="KW-0150">Chloroplast</keyword>
<keyword id="KW-0464">Manganese</keyword>
<keyword id="KW-0472">Membrane</keyword>
<keyword id="KW-0602">Photosynthesis</keyword>
<keyword id="KW-0604">Photosystem II</keyword>
<keyword id="KW-0934">Plastid</keyword>
<keyword id="KW-0793">Thylakoid</keyword>
<keyword id="KW-0809">Transit peptide</keyword>
<dbReference type="EMBL" id="AF110780">
    <property type="protein sequence ID" value="AAD55562.1"/>
    <property type="molecule type" value="mRNA"/>
</dbReference>
<dbReference type="SMR" id="Q9SBN6"/>
<dbReference type="GO" id="GO:0009535">
    <property type="term" value="C:chloroplast thylakoid membrane"/>
    <property type="evidence" value="ECO:0007669"/>
    <property type="project" value="UniProtKB-SubCell"/>
</dbReference>
<dbReference type="GO" id="GO:0009654">
    <property type="term" value="C:photosystem II oxygen evolving complex"/>
    <property type="evidence" value="ECO:0007669"/>
    <property type="project" value="InterPro"/>
</dbReference>
<dbReference type="GO" id="GO:0010242">
    <property type="term" value="F:oxygen evolving activity"/>
    <property type="evidence" value="ECO:0007669"/>
    <property type="project" value="InterPro"/>
</dbReference>
<dbReference type="GO" id="GO:0010207">
    <property type="term" value="P:photosystem II assembly"/>
    <property type="evidence" value="ECO:0007669"/>
    <property type="project" value="InterPro"/>
</dbReference>
<dbReference type="GO" id="GO:0042549">
    <property type="term" value="P:photosystem II stabilization"/>
    <property type="evidence" value="ECO:0007669"/>
    <property type="project" value="InterPro"/>
</dbReference>
<dbReference type="FunFam" id="3.30.2050.10:FF:000001">
    <property type="entry name" value="Oxygen-evolving enhancer protein 1, chloroplastic"/>
    <property type="match status" value="1"/>
</dbReference>
<dbReference type="Gene3D" id="3.30.2050.10">
    <property type="entry name" value="photosynthetic oxygen evolving center domain"/>
    <property type="match status" value="1"/>
</dbReference>
<dbReference type="Gene3D" id="2.40.160.30">
    <property type="entry name" value="Photosystem II, cytochrome c-550 precursor"/>
    <property type="match status" value="1"/>
</dbReference>
<dbReference type="InterPro" id="IPR011250">
    <property type="entry name" value="OMP/PagP_b-brl"/>
</dbReference>
<dbReference type="InterPro" id="IPR002628">
    <property type="entry name" value="PsbO"/>
</dbReference>
<dbReference type="PANTHER" id="PTHR34058">
    <property type="entry name" value="OXYGEN-EVOLVING ENHANCER PROTEIN 1-2, CHLOROPLASTIC"/>
    <property type="match status" value="1"/>
</dbReference>
<dbReference type="Pfam" id="PF01716">
    <property type="entry name" value="MSP"/>
    <property type="match status" value="1"/>
</dbReference>
<dbReference type="SUPFAM" id="SSF56925">
    <property type="entry name" value="OMPA-like"/>
    <property type="match status" value="1"/>
</dbReference>
<sequence>MRAAQTVKAAGVSRAARPVRANVVCKAQKVEFGQAAAAVVAASALVAGSANALTYDELQGLTYLQVKGTGIANTCPVLEKGSTDLSELSAGTYKLENFCIEPTSFTVKEESVFKGGETEFVKTKLMTRLTYTLDAMSGTLKVGSDGSAELKEEDGIDYAATTVQLPGGERVAFLFTIKQFDGKGTLDNIKGDFVVPSYRGSSFLDPKGRGGSTGYDNAVALPARADAEELLKENVKSTKALKGSAVFSVAKVNTATGEIAGVFESIQPSDTDLGAKPPKDIKITGLWYGQLSQ</sequence>
<comment type="function">
    <text evidence="1">Stabilizes the manganese cluster which is the primary site of water splitting.</text>
</comment>
<comment type="subcellular location">
    <subcellularLocation>
        <location>Plastid</location>
        <location>Chloroplast thylakoid membrane</location>
    </subcellularLocation>
    <text>Associated with the photosystem II complex.</text>
</comment>
<comment type="similarity">
    <text evidence="2">Belongs to the PsbO family.</text>
</comment>